<gene>
    <name evidence="1" type="primary">leuD1</name>
    <name type="synonym">leuD</name>
    <name type="ordered locus">STM0110</name>
</gene>
<comment type="function">
    <text evidence="1 2">Catalyzes the isomerization between 2-isopropylmalate and 3-isopropylmalate, via the formation of 2-isopropylmaleate.</text>
</comment>
<comment type="catalytic activity">
    <reaction evidence="1 2">
        <text>(2R,3S)-3-isopropylmalate = (2S)-2-isopropylmalate</text>
        <dbReference type="Rhea" id="RHEA:32287"/>
        <dbReference type="ChEBI" id="CHEBI:1178"/>
        <dbReference type="ChEBI" id="CHEBI:35121"/>
        <dbReference type="EC" id="4.2.1.33"/>
    </reaction>
</comment>
<comment type="pathway">
    <text evidence="1">Amino-acid biosynthesis; L-leucine biosynthesis; L-leucine from 3-methyl-2-oxobutanoate: step 2/4.</text>
</comment>
<comment type="subunit">
    <text evidence="1 2">Heterodimer of LeuC and LeuD.</text>
</comment>
<comment type="similarity">
    <text evidence="1 3">Belongs to the LeuD family. LeuD type 1 subfamily.</text>
</comment>
<proteinExistence type="evidence at protein level"/>
<name>LEUD1_SALTY</name>
<reference key="1">
    <citation type="journal article" date="1985" name="Mol. Gen. Genet.">
        <title>Characterization of the 3' end of the leucine operon of Salmonella typhimurium.</title>
        <authorList>
            <person name="Friedberg D."/>
            <person name="Rosenthal E.R."/>
            <person name="Jones J.W."/>
            <person name="Calvo J.M."/>
        </authorList>
    </citation>
    <scope>NUCLEOTIDE SEQUENCE [GENOMIC DNA]</scope>
</reference>
<reference key="2">
    <citation type="journal article" date="2001" name="Nature">
        <title>Complete genome sequence of Salmonella enterica serovar Typhimurium LT2.</title>
        <authorList>
            <person name="McClelland M."/>
            <person name="Sanderson K.E."/>
            <person name="Spieth J."/>
            <person name="Clifton S.W."/>
            <person name="Latreille P."/>
            <person name="Courtney L."/>
            <person name="Porwollik S."/>
            <person name="Ali J."/>
            <person name="Dante M."/>
            <person name="Du F."/>
            <person name="Hou S."/>
            <person name="Layman D."/>
            <person name="Leonard S."/>
            <person name="Nguyen C."/>
            <person name="Scott K."/>
            <person name="Holmes A."/>
            <person name="Grewal N."/>
            <person name="Mulvaney E."/>
            <person name="Ryan E."/>
            <person name="Sun H."/>
            <person name="Florea L."/>
            <person name="Miller W."/>
            <person name="Stoneking T."/>
            <person name="Nhan M."/>
            <person name="Waterston R."/>
            <person name="Wilson R.K."/>
        </authorList>
    </citation>
    <scope>NUCLEOTIDE SEQUENCE [LARGE SCALE GENOMIC DNA]</scope>
    <source>
        <strain>LT2 / SGSC1412 / ATCC 700720</strain>
    </source>
</reference>
<reference key="3">
    <citation type="journal article" date="1981" name="J. Bacteriol.">
        <title>Wild-type isopropylmalate isomerase in Salmonella typhimurium is composed of two different subunits.</title>
        <authorList>
            <person name="Fultz P.N."/>
            <person name="Kemper J."/>
        </authorList>
    </citation>
    <scope>FUNCTION</scope>
    <scope>CATALYTIC ACTIVITY</scope>
    <scope>SUBUNIT</scope>
    <source>
        <strain>LT2</strain>
    </source>
</reference>
<protein>
    <recommendedName>
        <fullName evidence="1">3-isopropylmalate dehydratase small subunit 1</fullName>
        <ecNumber evidence="1 2">4.2.1.33</ecNumber>
    </recommendedName>
    <alternativeName>
        <fullName evidence="1">Alpha-IPM isomerase 1</fullName>
        <shortName evidence="1">IPMI 1</shortName>
    </alternativeName>
    <alternativeName>
        <fullName evidence="1">Isopropylmalate isomerase 1</fullName>
    </alternativeName>
</protein>
<accession>P04787</accession>
<organism>
    <name type="scientific">Salmonella typhimurium (strain LT2 / SGSC1412 / ATCC 700720)</name>
    <dbReference type="NCBI Taxonomy" id="99287"/>
    <lineage>
        <taxon>Bacteria</taxon>
        <taxon>Pseudomonadati</taxon>
        <taxon>Pseudomonadota</taxon>
        <taxon>Gammaproteobacteria</taxon>
        <taxon>Enterobacterales</taxon>
        <taxon>Enterobacteriaceae</taxon>
        <taxon>Salmonella</taxon>
    </lineage>
</organism>
<keyword id="KW-0028">Amino-acid biosynthesis</keyword>
<keyword id="KW-0100">Branched-chain amino acid biosynthesis</keyword>
<keyword id="KW-0432">Leucine biosynthesis</keyword>
<keyword id="KW-0456">Lyase</keyword>
<keyword id="KW-1185">Reference proteome</keyword>
<feature type="chain" id="PRO_0000141875" description="3-isopropylmalate dehydratase small subunit 1">
    <location>
        <begin position="1"/>
        <end position="201"/>
    </location>
</feature>
<dbReference type="EC" id="4.2.1.33" evidence="1 2"/>
<dbReference type="EMBL" id="X02528">
    <property type="protein sequence ID" value="CAA26364.1"/>
    <property type="molecule type" value="Genomic_DNA"/>
</dbReference>
<dbReference type="EMBL" id="AE006468">
    <property type="protein sequence ID" value="AAL19074.1"/>
    <property type="molecule type" value="Genomic_DNA"/>
</dbReference>
<dbReference type="PIR" id="S07306">
    <property type="entry name" value="S07306"/>
</dbReference>
<dbReference type="RefSeq" id="NP_459115.1">
    <property type="nucleotide sequence ID" value="NC_003197.2"/>
</dbReference>
<dbReference type="RefSeq" id="WP_000818267.1">
    <property type="nucleotide sequence ID" value="NC_003197.2"/>
</dbReference>
<dbReference type="SMR" id="P04787"/>
<dbReference type="STRING" id="99287.STM0110"/>
<dbReference type="PaxDb" id="99287-STM0110"/>
<dbReference type="GeneID" id="1251628"/>
<dbReference type="KEGG" id="stm:STM0110"/>
<dbReference type="PATRIC" id="fig|99287.12.peg.116"/>
<dbReference type="HOGENOM" id="CLU_081378_0_3_6"/>
<dbReference type="OMA" id="FGQHLFH"/>
<dbReference type="PhylomeDB" id="P04787"/>
<dbReference type="BioCyc" id="SENT99287:STM0110-MONOMER"/>
<dbReference type="UniPathway" id="UPA00048">
    <property type="reaction ID" value="UER00071"/>
</dbReference>
<dbReference type="Proteomes" id="UP000001014">
    <property type="component" value="Chromosome"/>
</dbReference>
<dbReference type="GO" id="GO:0009316">
    <property type="term" value="C:3-isopropylmalate dehydratase complex"/>
    <property type="evidence" value="ECO:0007669"/>
    <property type="project" value="InterPro"/>
</dbReference>
<dbReference type="GO" id="GO:0003861">
    <property type="term" value="F:3-isopropylmalate dehydratase activity"/>
    <property type="evidence" value="ECO:0007669"/>
    <property type="project" value="UniProtKB-UniRule"/>
</dbReference>
<dbReference type="GO" id="GO:0009098">
    <property type="term" value="P:L-leucine biosynthetic process"/>
    <property type="evidence" value="ECO:0007669"/>
    <property type="project" value="UniProtKB-UniRule"/>
</dbReference>
<dbReference type="CDD" id="cd01577">
    <property type="entry name" value="IPMI_Swivel"/>
    <property type="match status" value="1"/>
</dbReference>
<dbReference type="FunFam" id="3.20.19.10:FF:000003">
    <property type="entry name" value="3-isopropylmalate dehydratase small subunit"/>
    <property type="match status" value="1"/>
</dbReference>
<dbReference type="Gene3D" id="3.20.19.10">
    <property type="entry name" value="Aconitase, domain 4"/>
    <property type="match status" value="1"/>
</dbReference>
<dbReference type="HAMAP" id="MF_01031">
    <property type="entry name" value="LeuD_type1"/>
    <property type="match status" value="1"/>
</dbReference>
<dbReference type="InterPro" id="IPR004431">
    <property type="entry name" value="3-IsopropMal_deHydase_ssu"/>
</dbReference>
<dbReference type="InterPro" id="IPR015928">
    <property type="entry name" value="Aconitase/3IPM_dehydase_swvl"/>
</dbReference>
<dbReference type="InterPro" id="IPR000573">
    <property type="entry name" value="AconitaseA/IPMdHydase_ssu_swvl"/>
</dbReference>
<dbReference type="InterPro" id="IPR033940">
    <property type="entry name" value="IPMI_Swivel"/>
</dbReference>
<dbReference type="InterPro" id="IPR050075">
    <property type="entry name" value="LeuD"/>
</dbReference>
<dbReference type="NCBIfam" id="TIGR00171">
    <property type="entry name" value="leuD"/>
    <property type="match status" value="1"/>
</dbReference>
<dbReference type="NCBIfam" id="NF002458">
    <property type="entry name" value="PRK01641.1"/>
    <property type="match status" value="1"/>
</dbReference>
<dbReference type="PANTHER" id="PTHR43345:SF5">
    <property type="entry name" value="3-ISOPROPYLMALATE DEHYDRATASE SMALL SUBUNIT"/>
    <property type="match status" value="1"/>
</dbReference>
<dbReference type="PANTHER" id="PTHR43345">
    <property type="entry name" value="3-ISOPROPYLMALATE DEHYDRATASE SMALL SUBUNIT 2-RELATED-RELATED"/>
    <property type="match status" value="1"/>
</dbReference>
<dbReference type="Pfam" id="PF00694">
    <property type="entry name" value="Aconitase_C"/>
    <property type="match status" value="1"/>
</dbReference>
<dbReference type="SUPFAM" id="SSF52016">
    <property type="entry name" value="LeuD/IlvD-like"/>
    <property type="match status" value="1"/>
</dbReference>
<sequence>MAEKFTQHTGLVVPLDAANVDTDAIIPKQFLQKVTRTGFGAHLFNDWRFLDEKGQQPNPEFVLNFPEYQGASILLARENFGCGSSREHAPWALTDYGFKVVIAPSFADIFYGNSFNNQLLPVTLSDAQVDELFALVKANPGIKFEVDLEAQVVKAGDKTYSFKIDDFRRHCMLNGLDSIGLTLQHEDAIAAYENKQPAFMR</sequence>
<evidence type="ECO:0000255" key="1">
    <source>
        <dbReference type="HAMAP-Rule" id="MF_01031"/>
    </source>
</evidence>
<evidence type="ECO:0000269" key="2">
    <source>
    </source>
</evidence>
<evidence type="ECO:0000305" key="3"/>